<keyword id="KW-1003">Cell membrane</keyword>
<keyword id="KW-0472">Membrane</keyword>
<keyword id="KW-0653">Protein transport</keyword>
<keyword id="KW-0811">Translocation</keyword>
<keyword id="KW-0812">Transmembrane</keyword>
<keyword id="KW-1133">Transmembrane helix</keyword>
<keyword id="KW-0813">Transport</keyword>
<evidence type="ECO:0000255" key="1">
    <source>
        <dbReference type="HAMAP-Rule" id="MF_01466"/>
    </source>
</evidence>
<name>SECY2_STRA1</name>
<proteinExistence type="inferred from homology"/>
<accession>Q3K059</accession>
<reference key="1">
    <citation type="journal article" date="2005" name="Proc. Natl. Acad. Sci. U.S.A.">
        <title>Genome analysis of multiple pathogenic isolates of Streptococcus agalactiae: implications for the microbial 'pan-genome'.</title>
        <authorList>
            <person name="Tettelin H."/>
            <person name="Masignani V."/>
            <person name="Cieslewicz M.J."/>
            <person name="Donati C."/>
            <person name="Medini D."/>
            <person name="Ward N.L."/>
            <person name="Angiuoli S.V."/>
            <person name="Crabtree J."/>
            <person name="Jones A.L."/>
            <person name="Durkin A.S."/>
            <person name="DeBoy R.T."/>
            <person name="Davidsen T.M."/>
            <person name="Mora M."/>
            <person name="Scarselli M."/>
            <person name="Margarit y Ros I."/>
            <person name="Peterson J.D."/>
            <person name="Hauser C.R."/>
            <person name="Sundaram J.P."/>
            <person name="Nelson W.C."/>
            <person name="Madupu R."/>
            <person name="Brinkac L.M."/>
            <person name="Dodson R.J."/>
            <person name="Rosovitz M.J."/>
            <person name="Sullivan S.A."/>
            <person name="Daugherty S.C."/>
            <person name="Haft D.H."/>
            <person name="Selengut J."/>
            <person name="Gwinn M.L."/>
            <person name="Zhou L."/>
            <person name="Zafar N."/>
            <person name="Khouri H."/>
            <person name="Radune D."/>
            <person name="Dimitrov G."/>
            <person name="Watkins K."/>
            <person name="O'Connor K.J."/>
            <person name="Smith S."/>
            <person name="Utterback T.R."/>
            <person name="White O."/>
            <person name="Rubens C.E."/>
            <person name="Grandi G."/>
            <person name="Madoff L.C."/>
            <person name="Kasper D.L."/>
            <person name="Telford J.L."/>
            <person name="Wessels M.R."/>
            <person name="Rappuoli R."/>
            <person name="Fraser C.M."/>
        </authorList>
    </citation>
    <scope>NUCLEOTIDE SEQUENCE [LARGE SCALE GENOMIC DNA]</scope>
    <source>
        <strain>ATCC 27591 / A909 / CDC SS700</strain>
    </source>
</reference>
<sequence>MKLLYIFEKNIILRKILITFSLIIIFLLGRYVPIPGVLISAYKGQDNNFATLYSTVTGGNLSQVGVFSLGIGPMMTTMILLRLFTIGKYSSGVSQKVQQFRQNVVMLVIAIIQGLAIAISFQYHNGFSLTKLLLATMILVTGAYIISWIGNLNAEYGFGGMTILVVVGMLVGQFNNIPLIFELFQDGYQLAIILFLLWTLVAMYLMITFERSEYRIPVMRTSIHNRLVDDAYMPIKVNASGGMAFMYVYTLLMFPQYIIILLRSIFPTNPDITSYNDYFSLSSIQGVVIYMILMLVLSVAFTFVNIDPTKISEAMRESGDFIPNYRPGKETQSYLSKICYLFGTFSGFFMAFLGGVPLLFALGNDNLRTVSSMTGIFMMITGMSFMILDEFQVIRIRKQYTSVFENEEN</sequence>
<organism>
    <name type="scientific">Streptococcus agalactiae serotype Ia (strain ATCC 27591 / A909 / CDC SS700)</name>
    <dbReference type="NCBI Taxonomy" id="205921"/>
    <lineage>
        <taxon>Bacteria</taxon>
        <taxon>Bacillati</taxon>
        <taxon>Bacillota</taxon>
        <taxon>Bacilli</taxon>
        <taxon>Lactobacillales</taxon>
        <taxon>Streptococcaceae</taxon>
        <taxon>Streptococcus</taxon>
    </lineage>
</organism>
<feature type="chain" id="PRO_0000414873" description="Accessory Sec system protein translocase subunit SecY2">
    <location>
        <begin position="1"/>
        <end position="409"/>
    </location>
</feature>
<feature type="transmembrane region" description="Helical" evidence="1">
    <location>
        <begin position="16"/>
        <end position="36"/>
    </location>
</feature>
<feature type="transmembrane region" description="Helical" evidence="1">
    <location>
        <begin position="61"/>
        <end position="81"/>
    </location>
</feature>
<feature type="transmembrane region" description="Helical" evidence="1">
    <location>
        <begin position="104"/>
        <end position="124"/>
    </location>
</feature>
<feature type="transmembrane region" description="Helical" evidence="1">
    <location>
        <begin position="132"/>
        <end position="152"/>
    </location>
</feature>
<feature type="transmembrane region" description="Helical" evidence="1">
    <location>
        <begin position="161"/>
        <end position="181"/>
    </location>
</feature>
<feature type="transmembrane region" description="Helical" evidence="1">
    <location>
        <begin position="190"/>
        <end position="210"/>
    </location>
</feature>
<feature type="transmembrane region" description="Helical" evidence="1">
    <location>
        <begin position="242"/>
        <end position="262"/>
    </location>
</feature>
<feature type="transmembrane region" description="Helical" evidence="1">
    <location>
        <begin position="286"/>
        <end position="306"/>
    </location>
</feature>
<feature type="transmembrane region" description="Helical" evidence="1">
    <location>
        <begin position="341"/>
        <end position="361"/>
    </location>
</feature>
<feature type="transmembrane region" description="Helical" evidence="1">
    <location>
        <begin position="374"/>
        <end position="394"/>
    </location>
</feature>
<gene>
    <name evidence="1" type="primary">secY2</name>
    <name type="ordered locus">SAK_1486</name>
</gene>
<comment type="function">
    <text evidence="1">Part of the accessory SecA2/SecY2 system specifically required for export of possible cell wall proteins. The central subunit of a protein translocation channel.</text>
</comment>
<comment type="subunit">
    <text evidence="1">Component of the accessory SecA2/SecY2 protein translocase complex required to export cell wall proteins. May form heterotrimers with SecE and SecG subunits.</text>
</comment>
<comment type="subcellular location">
    <subcellularLocation>
        <location evidence="1">Cell membrane</location>
        <topology evidence="1">Multi-pass membrane protein</topology>
    </subcellularLocation>
</comment>
<comment type="similarity">
    <text evidence="1">Belongs to the SecY/SEC61-alpha family. SecY2 subfamily.</text>
</comment>
<dbReference type="EMBL" id="CP000114">
    <property type="protein sequence ID" value="ABA45647.1"/>
    <property type="molecule type" value="Genomic_DNA"/>
</dbReference>
<dbReference type="RefSeq" id="WP_000772258.1">
    <property type="nucleotide sequence ID" value="NC_007432.1"/>
</dbReference>
<dbReference type="SMR" id="Q3K059"/>
<dbReference type="KEGG" id="sak:SAK_1486"/>
<dbReference type="HOGENOM" id="CLU_030313_4_0_9"/>
<dbReference type="GO" id="GO:0005886">
    <property type="term" value="C:plasma membrane"/>
    <property type="evidence" value="ECO:0007669"/>
    <property type="project" value="UniProtKB-SubCell"/>
</dbReference>
<dbReference type="GO" id="GO:0065002">
    <property type="term" value="P:intracellular protein transmembrane transport"/>
    <property type="evidence" value="ECO:0007669"/>
    <property type="project" value="UniProtKB-UniRule"/>
</dbReference>
<dbReference type="GO" id="GO:0006605">
    <property type="term" value="P:protein targeting"/>
    <property type="evidence" value="ECO:0007669"/>
    <property type="project" value="UniProtKB-UniRule"/>
</dbReference>
<dbReference type="Gene3D" id="1.10.3370.10">
    <property type="entry name" value="SecY subunit domain"/>
    <property type="match status" value="1"/>
</dbReference>
<dbReference type="HAMAP" id="MF_01466">
    <property type="entry name" value="SecY2"/>
    <property type="match status" value="1"/>
</dbReference>
<dbReference type="InterPro" id="IPR002208">
    <property type="entry name" value="SecY/SEC61-alpha"/>
</dbReference>
<dbReference type="InterPro" id="IPR014269">
    <property type="entry name" value="SecY2"/>
</dbReference>
<dbReference type="InterPro" id="IPR023201">
    <property type="entry name" value="SecY_dom_sf"/>
</dbReference>
<dbReference type="NCBIfam" id="TIGR02920">
    <property type="entry name" value="acc_sec_Y2"/>
    <property type="match status" value="1"/>
</dbReference>
<dbReference type="NCBIfam" id="NF009082">
    <property type="entry name" value="PRK12417.1"/>
    <property type="match status" value="1"/>
</dbReference>
<dbReference type="PANTHER" id="PTHR10906">
    <property type="entry name" value="SECY/SEC61-ALPHA FAMILY MEMBER"/>
    <property type="match status" value="1"/>
</dbReference>
<dbReference type="Pfam" id="PF00344">
    <property type="entry name" value="SecY"/>
    <property type="match status" value="1"/>
</dbReference>
<dbReference type="PIRSF" id="PIRSF004557">
    <property type="entry name" value="SecY"/>
    <property type="match status" value="1"/>
</dbReference>
<dbReference type="PRINTS" id="PR00303">
    <property type="entry name" value="SECYTRNLCASE"/>
</dbReference>
<dbReference type="SUPFAM" id="SSF103491">
    <property type="entry name" value="Preprotein translocase SecY subunit"/>
    <property type="match status" value="1"/>
</dbReference>
<protein>
    <recommendedName>
        <fullName evidence="1">Accessory Sec system protein translocase subunit SecY2</fullName>
    </recommendedName>
</protein>